<reference key="1">
    <citation type="journal article" date="2011" name="J. Bacteriol.">
        <title>Comparative genomics of 28 Salmonella enterica isolates: evidence for CRISPR-mediated adaptive sublineage evolution.</title>
        <authorList>
            <person name="Fricke W.F."/>
            <person name="Mammel M.K."/>
            <person name="McDermott P.F."/>
            <person name="Tartera C."/>
            <person name="White D.G."/>
            <person name="Leclerc J.E."/>
            <person name="Ravel J."/>
            <person name="Cebula T.A."/>
        </authorList>
    </citation>
    <scope>NUCLEOTIDE SEQUENCE [LARGE SCALE GENOMIC DNA]</scope>
    <source>
        <strain>SL254</strain>
    </source>
</reference>
<name>DXS_SALNS</name>
<sequence length="620" mass="67468">MSFDIAKYPTLALVDSTQELRLLPKESLPKLCDELRRYLLDSVSRSSGHFASGLGTVELTVALHYVYNTPFDQLIWDVGHQAYPHKILTGRRDKIGTIRQKGGLHPFPWRGESEYDVLSVGHSSTSISAGIGIAVAAEKEGKDRRTVCVIGDGAITAGMAFEAMNHAGDIRPDMLVILNDNEMSISENVGALNNHLAQLLSGKLYSSLREGGKKVFSGVPPIKELLKRTEEHIKGMVVPGTLFEELGFNYIGPVDGHDVMGLISTLKNMRDLKGPQFLHIMTKKGRGYEPAEKDPITFHAVPKFDPSSGCLPKSSGGLPGYSKIFGDWLCETAAKDSKLMAITPAMREGSGMVEFSRKFPDRYFDVAIAEQHAVTFAAGLAIGGYKPVVAIYSTFLQRAYDQVIHDVAIQKLPVMFAIDRAGIVGADGQTHQGAFDLSYLRCIPDMVIMTPSDENECRQMLFTGYHYNDGPTAVRYPRGNAQGVALTPLEKLPIGKGLVKRHGEKLAILNFGTLMPEAAKVAEALNATLVDMRFVKPLDDTLILEMAAQHDALVTLEENAIMGGAGSGVNEVLMAHRKPVPVLNIGLPDFFIPQGTQEEARAELGLDAAGIEAKIKAWLA</sequence>
<evidence type="ECO:0000255" key="1">
    <source>
        <dbReference type="HAMAP-Rule" id="MF_00315"/>
    </source>
</evidence>
<feature type="chain" id="PRO_1000115769" description="1-deoxy-D-xylulose-5-phosphate synthase">
    <location>
        <begin position="1"/>
        <end position="620"/>
    </location>
</feature>
<feature type="binding site" evidence="1">
    <location>
        <position position="80"/>
    </location>
    <ligand>
        <name>thiamine diphosphate</name>
        <dbReference type="ChEBI" id="CHEBI:58937"/>
    </ligand>
</feature>
<feature type="binding site" evidence="1">
    <location>
        <begin position="121"/>
        <end position="123"/>
    </location>
    <ligand>
        <name>thiamine diphosphate</name>
        <dbReference type="ChEBI" id="CHEBI:58937"/>
    </ligand>
</feature>
<feature type="binding site" evidence="1">
    <location>
        <position position="152"/>
    </location>
    <ligand>
        <name>Mg(2+)</name>
        <dbReference type="ChEBI" id="CHEBI:18420"/>
    </ligand>
</feature>
<feature type="binding site" evidence="1">
    <location>
        <begin position="153"/>
        <end position="154"/>
    </location>
    <ligand>
        <name>thiamine diphosphate</name>
        <dbReference type="ChEBI" id="CHEBI:58937"/>
    </ligand>
</feature>
<feature type="binding site" evidence="1">
    <location>
        <position position="181"/>
    </location>
    <ligand>
        <name>Mg(2+)</name>
        <dbReference type="ChEBI" id="CHEBI:18420"/>
    </ligand>
</feature>
<feature type="binding site" evidence="1">
    <location>
        <position position="181"/>
    </location>
    <ligand>
        <name>thiamine diphosphate</name>
        <dbReference type="ChEBI" id="CHEBI:58937"/>
    </ligand>
</feature>
<feature type="binding site" evidence="1">
    <location>
        <position position="288"/>
    </location>
    <ligand>
        <name>thiamine diphosphate</name>
        <dbReference type="ChEBI" id="CHEBI:58937"/>
    </ligand>
</feature>
<feature type="binding site" evidence="1">
    <location>
        <position position="370"/>
    </location>
    <ligand>
        <name>thiamine diphosphate</name>
        <dbReference type="ChEBI" id="CHEBI:58937"/>
    </ligand>
</feature>
<accession>B4SWR4</accession>
<dbReference type="EC" id="2.2.1.7" evidence="1"/>
<dbReference type="EMBL" id="CP001113">
    <property type="protein sequence ID" value="ACF62045.1"/>
    <property type="molecule type" value="Genomic_DNA"/>
</dbReference>
<dbReference type="RefSeq" id="WP_000006777.1">
    <property type="nucleotide sequence ID" value="NZ_CCMR01000003.1"/>
</dbReference>
<dbReference type="SMR" id="B4SWR4"/>
<dbReference type="KEGG" id="see:SNSL254_A0469"/>
<dbReference type="HOGENOM" id="CLU_009227_1_4_6"/>
<dbReference type="UniPathway" id="UPA00064">
    <property type="reaction ID" value="UER00091"/>
</dbReference>
<dbReference type="Proteomes" id="UP000008824">
    <property type="component" value="Chromosome"/>
</dbReference>
<dbReference type="GO" id="GO:0005829">
    <property type="term" value="C:cytosol"/>
    <property type="evidence" value="ECO:0007669"/>
    <property type="project" value="TreeGrafter"/>
</dbReference>
<dbReference type="GO" id="GO:0008661">
    <property type="term" value="F:1-deoxy-D-xylulose-5-phosphate synthase activity"/>
    <property type="evidence" value="ECO:0007669"/>
    <property type="project" value="UniProtKB-UniRule"/>
</dbReference>
<dbReference type="GO" id="GO:0000287">
    <property type="term" value="F:magnesium ion binding"/>
    <property type="evidence" value="ECO:0007669"/>
    <property type="project" value="UniProtKB-UniRule"/>
</dbReference>
<dbReference type="GO" id="GO:0030976">
    <property type="term" value="F:thiamine pyrophosphate binding"/>
    <property type="evidence" value="ECO:0007669"/>
    <property type="project" value="UniProtKB-UniRule"/>
</dbReference>
<dbReference type="GO" id="GO:0052865">
    <property type="term" value="P:1-deoxy-D-xylulose 5-phosphate biosynthetic process"/>
    <property type="evidence" value="ECO:0007669"/>
    <property type="project" value="UniProtKB-UniPathway"/>
</dbReference>
<dbReference type="GO" id="GO:0019288">
    <property type="term" value="P:isopentenyl diphosphate biosynthetic process, methylerythritol 4-phosphate pathway"/>
    <property type="evidence" value="ECO:0007669"/>
    <property type="project" value="TreeGrafter"/>
</dbReference>
<dbReference type="GO" id="GO:0016114">
    <property type="term" value="P:terpenoid biosynthetic process"/>
    <property type="evidence" value="ECO:0007669"/>
    <property type="project" value="UniProtKB-UniRule"/>
</dbReference>
<dbReference type="GO" id="GO:0009228">
    <property type="term" value="P:thiamine biosynthetic process"/>
    <property type="evidence" value="ECO:0007669"/>
    <property type="project" value="UniProtKB-UniRule"/>
</dbReference>
<dbReference type="CDD" id="cd02007">
    <property type="entry name" value="TPP_DXS"/>
    <property type="match status" value="1"/>
</dbReference>
<dbReference type="CDD" id="cd07033">
    <property type="entry name" value="TPP_PYR_DXS_TK_like"/>
    <property type="match status" value="1"/>
</dbReference>
<dbReference type="FunFam" id="3.40.50.920:FF:000002">
    <property type="entry name" value="1-deoxy-D-xylulose-5-phosphate synthase"/>
    <property type="match status" value="1"/>
</dbReference>
<dbReference type="FunFam" id="3.40.50.970:FF:000005">
    <property type="entry name" value="1-deoxy-D-xylulose-5-phosphate synthase"/>
    <property type="match status" value="1"/>
</dbReference>
<dbReference type="Gene3D" id="3.40.50.920">
    <property type="match status" value="1"/>
</dbReference>
<dbReference type="Gene3D" id="3.40.50.970">
    <property type="match status" value="2"/>
</dbReference>
<dbReference type="HAMAP" id="MF_00315">
    <property type="entry name" value="DXP_synth"/>
    <property type="match status" value="1"/>
</dbReference>
<dbReference type="InterPro" id="IPR005477">
    <property type="entry name" value="Dxylulose-5-P_synthase"/>
</dbReference>
<dbReference type="InterPro" id="IPR029061">
    <property type="entry name" value="THDP-binding"/>
</dbReference>
<dbReference type="InterPro" id="IPR009014">
    <property type="entry name" value="Transketo_C/PFOR_II"/>
</dbReference>
<dbReference type="InterPro" id="IPR005475">
    <property type="entry name" value="Transketolase-like_Pyr-bd"/>
</dbReference>
<dbReference type="InterPro" id="IPR020826">
    <property type="entry name" value="Transketolase_BS"/>
</dbReference>
<dbReference type="InterPro" id="IPR033248">
    <property type="entry name" value="Transketolase_C"/>
</dbReference>
<dbReference type="InterPro" id="IPR049557">
    <property type="entry name" value="Transketolase_CS"/>
</dbReference>
<dbReference type="NCBIfam" id="TIGR00204">
    <property type="entry name" value="dxs"/>
    <property type="match status" value="1"/>
</dbReference>
<dbReference type="NCBIfam" id="NF003933">
    <property type="entry name" value="PRK05444.2-2"/>
    <property type="match status" value="1"/>
</dbReference>
<dbReference type="PANTHER" id="PTHR43322">
    <property type="entry name" value="1-D-DEOXYXYLULOSE 5-PHOSPHATE SYNTHASE-RELATED"/>
    <property type="match status" value="1"/>
</dbReference>
<dbReference type="PANTHER" id="PTHR43322:SF5">
    <property type="entry name" value="1-DEOXY-D-XYLULOSE-5-PHOSPHATE SYNTHASE, CHLOROPLASTIC"/>
    <property type="match status" value="1"/>
</dbReference>
<dbReference type="Pfam" id="PF13292">
    <property type="entry name" value="DXP_synthase_N"/>
    <property type="match status" value="1"/>
</dbReference>
<dbReference type="Pfam" id="PF02779">
    <property type="entry name" value="Transket_pyr"/>
    <property type="match status" value="1"/>
</dbReference>
<dbReference type="Pfam" id="PF02780">
    <property type="entry name" value="Transketolase_C"/>
    <property type="match status" value="1"/>
</dbReference>
<dbReference type="SMART" id="SM00861">
    <property type="entry name" value="Transket_pyr"/>
    <property type="match status" value="1"/>
</dbReference>
<dbReference type="SUPFAM" id="SSF52518">
    <property type="entry name" value="Thiamin diphosphate-binding fold (THDP-binding)"/>
    <property type="match status" value="2"/>
</dbReference>
<dbReference type="SUPFAM" id="SSF52922">
    <property type="entry name" value="TK C-terminal domain-like"/>
    <property type="match status" value="1"/>
</dbReference>
<dbReference type="PROSITE" id="PS00801">
    <property type="entry name" value="TRANSKETOLASE_1"/>
    <property type="match status" value="1"/>
</dbReference>
<dbReference type="PROSITE" id="PS00802">
    <property type="entry name" value="TRANSKETOLASE_2"/>
    <property type="match status" value="1"/>
</dbReference>
<protein>
    <recommendedName>
        <fullName evidence="1">1-deoxy-D-xylulose-5-phosphate synthase</fullName>
        <ecNumber evidence="1">2.2.1.7</ecNumber>
    </recommendedName>
    <alternativeName>
        <fullName evidence="1">1-deoxyxylulose-5-phosphate synthase</fullName>
        <shortName evidence="1">DXP synthase</shortName>
        <shortName evidence="1">DXPS</shortName>
    </alternativeName>
</protein>
<comment type="function">
    <text evidence="1">Catalyzes the acyloin condensation reaction between C atoms 2 and 3 of pyruvate and glyceraldehyde 3-phosphate to yield 1-deoxy-D-xylulose-5-phosphate (DXP).</text>
</comment>
<comment type="catalytic activity">
    <reaction evidence="1">
        <text>D-glyceraldehyde 3-phosphate + pyruvate + H(+) = 1-deoxy-D-xylulose 5-phosphate + CO2</text>
        <dbReference type="Rhea" id="RHEA:12605"/>
        <dbReference type="ChEBI" id="CHEBI:15361"/>
        <dbReference type="ChEBI" id="CHEBI:15378"/>
        <dbReference type="ChEBI" id="CHEBI:16526"/>
        <dbReference type="ChEBI" id="CHEBI:57792"/>
        <dbReference type="ChEBI" id="CHEBI:59776"/>
        <dbReference type="EC" id="2.2.1.7"/>
    </reaction>
</comment>
<comment type="cofactor">
    <cofactor evidence="1">
        <name>Mg(2+)</name>
        <dbReference type="ChEBI" id="CHEBI:18420"/>
    </cofactor>
    <text evidence="1">Binds 1 Mg(2+) ion per subunit.</text>
</comment>
<comment type="cofactor">
    <cofactor evidence="1">
        <name>thiamine diphosphate</name>
        <dbReference type="ChEBI" id="CHEBI:58937"/>
    </cofactor>
    <text evidence="1">Binds 1 thiamine pyrophosphate per subunit.</text>
</comment>
<comment type="pathway">
    <text evidence="1">Metabolic intermediate biosynthesis; 1-deoxy-D-xylulose 5-phosphate biosynthesis; 1-deoxy-D-xylulose 5-phosphate from D-glyceraldehyde 3-phosphate and pyruvate: step 1/1.</text>
</comment>
<comment type="subunit">
    <text evidence="1">Homodimer.</text>
</comment>
<comment type="similarity">
    <text evidence="1">Belongs to the transketolase family. DXPS subfamily.</text>
</comment>
<proteinExistence type="inferred from homology"/>
<keyword id="KW-0414">Isoprene biosynthesis</keyword>
<keyword id="KW-0460">Magnesium</keyword>
<keyword id="KW-0479">Metal-binding</keyword>
<keyword id="KW-0784">Thiamine biosynthesis</keyword>
<keyword id="KW-0786">Thiamine pyrophosphate</keyword>
<keyword id="KW-0808">Transferase</keyword>
<gene>
    <name evidence="1" type="primary">dxs</name>
    <name type="ordered locus">SNSL254_A0469</name>
</gene>
<organism>
    <name type="scientific">Salmonella newport (strain SL254)</name>
    <dbReference type="NCBI Taxonomy" id="423368"/>
    <lineage>
        <taxon>Bacteria</taxon>
        <taxon>Pseudomonadati</taxon>
        <taxon>Pseudomonadota</taxon>
        <taxon>Gammaproteobacteria</taxon>
        <taxon>Enterobacterales</taxon>
        <taxon>Enterobacteriaceae</taxon>
        <taxon>Salmonella</taxon>
    </lineage>
</organism>